<organism>
    <name type="scientific">Staphylococcus aureus (strain MRSA252)</name>
    <dbReference type="NCBI Taxonomy" id="282458"/>
    <lineage>
        <taxon>Bacteria</taxon>
        <taxon>Bacillati</taxon>
        <taxon>Bacillota</taxon>
        <taxon>Bacilli</taxon>
        <taxon>Bacillales</taxon>
        <taxon>Staphylococcaceae</taxon>
        <taxon>Staphylococcus</taxon>
    </lineage>
</organism>
<sequence>MKNYSFYQFVMTVRGRHDDKGRLAEEIFDDLAFPKHDDDFNILSDYIETHGDFTLPMSVFDDLYEEYTEWLKF</sequence>
<evidence type="ECO:0000255" key="1">
    <source>
        <dbReference type="HAMAP-Rule" id="MF_01538"/>
    </source>
</evidence>
<comment type="similarity">
    <text evidence="1">Belongs to the UPF0346 family.</text>
</comment>
<protein>
    <recommendedName>
        <fullName evidence="1">UPF0346 protein SAR1434</fullName>
    </recommendedName>
</protein>
<dbReference type="EMBL" id="BX571856">
    <property type="protein sequence ID" value="CAG40431.1"/>
    <property type="molecule type" value="Genomic_DNA"/>
</dbReference>
<dbReference type="RefSeq" id="WP_000801007.1">
    <property type="nucleotide sequence ID" value="NC_002952.2"/>
</dbReference>
<dbReference type="SMR" id="Q6GGY6"/>
<dbReference type="KEGG" id="sar:SAR1434"/>
<dbReference type="HOGENOM" id="CLU_177534_1_0_9"/>
<dbReference type="Proteomes" id="UP000000596">
    <property type="component" value="Chromosome"/>
</dbReference>
<dbReference type="Gene3D" id="1.10.150.260">
    <property type="entry name" value="YozE SAM-like"/>
    <property type="match status" value="1"/>
</dbReference>
<dbReference type="HAMAP" id="MF_01538">
    <property type="entry name" value="UPF0346"/>
    <property type="match status" value="1"/>
</dbReference>
<dbReference type="InterPro" id="IPR010673">
    <property type="entry name" value="UPF0346"/>
</dbReference>
<dbReference type="InterPro" id="IPR023089">
    <property type="entry name" value="YozE_SAM-like"/>
</dbReference>
<dbReference type="InterPro" id="IPR036806">
    <property type="entry name" value="YozE_SAM-like_sf"/>
</dbReference>
<dbReference type="NCBIfam" id="NF010193">
    <property type="entry name" value="PRK13672.1"/>
    <property type="match status" value="1"/>
</dbReference>
<dbReference type="Pfam" id="PF06855">
    <property type="entry name" value="YozE_SAM_like"/>
    <property type="match status" value="1"/>
</dbReference>
<dbReference type="PIRSF" id="PIRSF037262">
    <property type="entry name" value="UCP037262"/>
    <property type="match status" value="1"/>
</dbReference>
<dbReference type="SUPFAM" id="SSF140652">
    <property type="entry name" value="YozE-like"/>
    <property type="match status" value="1"/>
</dbReference>
<gene>
    <name type="ordered locus">SAR1434</name>
</gene>
<proteinExistence type="inferred from homology"/>
<name>Y1434_STAAR</name>
<feature type="chain" id="PRO_0000164284" description="UPF0346 protein SAR1434">
    <location>
        <begin position="1"/>
        <end position="73"/>
    </location>
</feature>
<reference key="1">
    <citation type="journal article" date="2004" name="Proc. Natl. Acad. Sci. U.S.A.">
        <title>Complete genomes of two clinical Staphylococcus aureus strains: evidence for the rapid evolution of virulence and drug resistance.</title>
        <authorList>
            <person name="Holden M.T.G."/>
            <person name="Feil E.J."/>
            <person name="Lindsay J.A."/>
            <person name="Peacock S.J."/>
            <person name="Day N.P.J."/>
            <person name="Enright M.C."/>
            <person name="Foster T.J."/>
            <person name="Moore C.E."/>
            <person name="Hurst L."/>
            <person name="Atkin R."/>
            <person name="Barron A."/>
            <person name="Bason N."/>
            <person name="Bentley S.D."/>
            <person name="Chillingworth C."/>
            <person name="Chillingworth T."/>
            <person name="Churcher C."/>
            <person name="Clark L."/>
            <person name="Corton C."/>
            <person name="Cronin A."/>
            <person name="Doggett J."/>
            <person name="Dowd L."/>
            <person name="Feltwell T."/>
            <person name="Hance Z."/>
            <person name="Harris B."/>
            <person name="Hauser H."/>
            <person name="Holroyd S."/>
            <person name="Jagels K."/>
            <person name="James K.D."/>
            <person name="Lennard N."/>
            <person name="Line A."/>
            <person name="Mayes R."/>
            <person name="Moule S."/>
            <person name="Mungall K."/>
            <person name="Ormond D."/>
            <person name="Quail M.A."/>
            <person name="Rabbinowitsch E."/>
            <person name="Rutherford K.M."/>
            <person name="Sanders M."/>
            <person name="Sharp S."/>
            <person name="Simmonds M."/>
            <person name="Stevens K."/>
            <person name="Whitehead S."/>
            <person name="Barrell B.G."/>
            <person name="Spratt B.G."/>
            <person name="Parkhill J."/>
        </authorList>
    </citation>
    <scope>NUCLEOTIDE SEQUENCE [LARGE SCALE GENOMIC DNA]</scope>
    <source>
        <strain>MRSA252</strain>
    </source>
</reference>
<accession>Q6GGY6</accession>